<keyword id="KW-0521">NADP</keyword>
<keyword id="KW-0560">Oxidoreductase</keyword>
<keyword id="KW-0627">Porphyrin biosynthesis</keyword>
<proteinExistence type="inferred from homology"/>
<comment type="function">
    <text evidence="1">Catalyzes the NADPH-dependent reduction of glutamyl-tRNA(Glu) to glutamate 1-semialdehyde (GSA).</text>
</comment>
<comment type="catalytic activity">
    <reaction evidence="1">
        <text>(S)-4-amino-5-oxopentanoate + tRNA(Glu) + NADP(+) = L-glutamyl-tRNA(Glu) + NADPH + H(+)</text>
        <dbReference type="Rhea" id="RHEA:12344"/>
        <dbReference type="Rhea" id="RHEA-COMP:9663"/>
        <dbReference type="Rhea" id="RHEA-COMP:9680"/>
        <dbReference type="ChEBI" id="CHEBI:15378"/>
        <dbReference type="ChEBI" id="CHEBI:57501"/>
        <dbReference type="ChEBI" id="CHEBI:57783"/>
        <dbReference type="ChEBI" id="CHEBI:58349"/>
        <dbReference type="ChEBI" id="CHEBI:78442"/>
        <dbReference type="ChEBI" id="CHEBI:78520"/>
        <dbReference type="EC" id="1.2.1.70"/>
    </reaction>
</comment>
<comment type="pathway">
    <text evidence="1">Porphyrin-containing compound metabolism; protoporphyrin-IX biosynthesis; 5-aminolevulinate from L-glutamyl-tRNA(Glu): step 1/2.</text>
</comment>
<comment type="subunit">
    <text evidence="1">Homodimer.</text>
</comment>
<comment type="domain">
    <text evidence="1">Possesses an unusual extended V-shaped dimeric structure with each monomer consisting of three distinct domains arranged along a curved 'spinal' alpha-helix. The N-terminal catalytic domain specifically recognizes the glutamate moiety of the substrate. The second domain is the NADPH-binding domain, and the third C-terminal domain is responsible for dimerization.</text>
</comment>
<comment type="miscellaneous">
    <text evidence="1">During catalysis, the active site Cys acts as a nucleophile attacking the alpha-carbonyl group of tRNA-bound glutamate with the formation of a thioester intermediate between enzyme and glutamate, and the concomitant release of tRNA(Glu). The thioester intermediate is finally reduced by direct hydride transfer from NADPH, to form the product GSA.</text>
</comment>
<comment type="similarity">
    <text evidence="1">Belongs to the glutamyl-tRNA reductase family.</text>
</comment>
<comment type="sequence caution" evidence="2">
    <conflict type="erroneous initiation">
        <sequence resource="EMBL-CDS" id="ABG17828"/>
    </conflict>
</comment>
<protein>
    <recommendedName>
        <fullName evidence="1">Glutamyl-tRNA reductase</fullName>
        <shortName evidence="1">GluTR</shortName>
        <ecNumber evidence="1">1.2.1.70</ecNumber>
    </recommendedName>
</protein>
<organism>
    <name type="scientific">Yersinia pestis bv. Antiqua (strain Nepal516)</name>
    <dbReference type="NCBI Taxonomy" id="377628"/>
    <lineage>
        <taxon>Bacteria</taxon>
        <taxon>Pseudomonadati</taxon>
        <taxon>Pseudomonadota</taxon>
        <taxon>Gammaproteobacteria</taxon>
        <taxon>Enterobacterales</taxon>
        <taxon>Yersiniaceae</taxon>
        <taxon>Yersinia</taxon>
    </lineage>
</organism>
<feature type="chain" id="PRO_0000335083" description="Glutamyl-tRNA reductase">
    <location>
        <begin position="1"/>
        <end position="420"/>
    </location>
</feature>
<feature type="active site" description="Nucleophile" evidence="1">
    <location>
        <position position="50"/>
    </location>
</feature>
<feature type="binding site" evidence="1">
    <location>
        <begin position="49"/>
        <end position="52"/>
    </location>
    <ligand>
        <name>substrate</name>
    </ligand>
</feature>
<feature type="binding site" evidence="1">
    <location>
        <position position="109"/>
    </location>
    <ligand>
        <name>substrate</name>
    </ligand>
</feature>
<feature type="binding site" evidence="1">
    <location>
        <begin position="114"/>
        <end position="116"/>
    </location>
    <ligand>
        <name>substrate</name>
    </ligand>
</feature>
<feature type="binding site" evidence="1">
    <location>
        <position position="120"/>
    </location>
    <ligand>
        <name>substrate</name>
    </ligand>
</feature>
<feature type="binding site" evidence="1">
    <location>
        <begin position="189"/>
        <end position="194"/>
    </location>
    <ligand>
        <name>NADP(+)</name>
        <dbReference type="ChEBI" id="CHEBI:58349"/>
    </ligand>
</feature>
<feature type="site" description="Important for activity" evidence="1">
    <location>
        <position position="99"/>
    </location>
</feature>
<evidence type="ECO:0000255" key="1">
    <source>
        <dbReference type="HAMAP-Rule" id="MF_00087"/>
    </source>
</evidence>
<evidence type="ECO:0000305" key="2"/>
<gene>
    <name evidence="1" type="primary">hemA</name>
    <name type="ordered locus">YPN_1498</name>
    <name type="ORF">YP516_1658</name>
</gene>
<reference key="1">
    <citation type="journal article" date="2006" name="J. Bacteriol.">
        <title>Complete genome sequence of Yersinia pestis strains Antiqua and Nepal516: evidence of gene reduction in an emerging pathogen.</title>
        <authorList>
            <person name="Chain P.S.G."/>
            <person name="Hu P."/>
            <person name="Malfatti S.A."/>
            <person name="Radnedge L."/>
            <person name="Larimer F."/>
            <person name="Vergez L.M."/>
            <person name="Worsham P."/>
            <person name="Chu M.C."/>
            <person name="Andersen G.L."/>
        </authorList>
    </citation>
    <scope>NUCLEOTIDE SEQUENCE [LARGE SCALE GENOMIC DNA]</scope>
    <source>
        <strain>Nepal516</strain>
    </source>
</reference>
<reference key="2">
    <citation type="submission" date="2009-04" db="EMBL/GenBank/DDBJ databases">
        <title>Yersinia pestis Nepal516A whole genome shotgun sequencing project.</title>
        <authorList>
            <person name="Plunkett G. III"/>
            <person name="Anderson B.D."/>
            <person name="Baumler D.J."/>
            <person name="Burland V."/>
            <person name="Cabot E.L."/>
            <person name="Glasner J.D."/>
            <person name="Mau B."/>
            <person name="Neeno-Eckwall E."/>
            <person name="Perna N.T."/>
            <person name="Munk A.C."/>
            <person name="Tapia R."/>
            <person name="Green L.D."/>
            <person name="Rogers Y.C."/>
            <person name="Detter J.C."/>
            <person name="Bruce D.C."/>
            <person name="Brettin T.S."/>
        </authorList>
    </citation>
    <scope>NUCLEOTIDE SEQUENCE [LARGE SCALE GENOMIC DNA]</scope>
    <source>
        <strain>Nepal516</strain>
    </source>
</reference>
<sequence length="420" mass="46660">MTLLALGINHKTAPVSLRERVTFSPESMDQALNSLLQQPLVQGGVVLSTCNRTELYLSVEQQENLHEQLTAWLCNYHKLSPDDVRQSLYWHHGNDAVRHLMRVASGLDSQVLGEPQILGQVKKAFAESQRGQSLSSELERLFQKSFSVAKRVRTETEIGASAVSVAFAACSLARQIFESLSELHVLLVGAGETIELVARHLREHQVKHMIIANRTRERAQSLASEVGAEVITLPEIDARLADADIIISSTASPLPIIGKGMVERALKTRRNQPMLFIDIAVPRDIEPEVGKLSNAYLYSVDDLQAIIQHNMAQRQAAAVQAESIVQQESMNFMTWLRAQGAVETIRDYRSQAEQVRSEMTAKALVAIEQGANVEQVINELAYKLTNRLIHAPTKSLQQAASDGDMERLQLLRDSLGLDQH</sequence>
<dbReference type="EC" id="1.2.1.70" evidence="1"/>
<dbReference type="EMBL" id="CP000305">
    <property type="protein sequence ID" value="ABG17828.1"/>
    <property type="status" value="ALT_INIT"/>
    <property type="molecule type" value="Genomic_DNA"/>
</dbReference>
<dbReference type="EMBL" id="ACNQ01000009">
    <property type="protein sequence ID" value="EEO76930.1"/>
    <property type="molecule type" value="Genomic_DNA"/>
</dbReference>
<dbReference type="RefSeq" id="WP_002211237.1">
    <property type="nucleotide sequence ID" value="NZ_ACNQ01000009.1"/>
</dbReference>
<dbReference type="SMR" id="Q1CJK2"/>
<dbReference type="GeneID" id="57976645"/>
<dbReference type="KEGG" id="ypn:YPN_1498"/>
<dbReference type="HOGENOM" id="CLU_035113_2_2_6"/>
<dbReference type="UniPathway" id="UPA00251">
    <property type="reaction ID" value="UER00316"/>
</dbReference>
<dbReference type="Proteomes" id="UP000008936">
    <property type="component" value="Chromosome"/>
</dbReference>
<dbReference type="GO" id="GO:0008883">
    <property type="term" value="F:glutamyl-tRNA reductase activity"/>
    <property type="evidence" value="ECO:0007669"/>
    <property type="project" value="UniProtKB-UniRule"/>
</dbReference>
<dbReference type="GO" id="GO:0050661">
    <property type="term" value="F:NADP binding"/>
    <property type="evidence" value="ECO:0007669"/>
    <property type="project" value="InterPro"/>
</dbReference>
<dbReference type="GO" id="GO:0019353">
    <property type="term" value="P:protoporphyrinogen IX biosynthetic process from glutamate"/>
    <property type="evidence" value="ECO:0007669"/>
    <property type="project" value="TreeGrafter"/>
</dbReference>
<dbReference type="CDD" id="cd05213">
    <property type="entry name" value="NAD_bind_Glutamyl_tRNA_reduct"/>
    <property type="match status" value="1"/>
</dbReference>
<dbReference type="FunFam" id="3.30.460.30:FF:000001">
    <property type="entry name" value="Glutamyl-tRNA reductase"/>
    <property type="match status" value="1"/>
</dbReference>
<dbReference type="FunFam" id="3.40.50.720:FF:000031">
    <property type="entry name" value="Glutamyl-tRNA reductase"/>
    <property type="match status" value="1"/>
</dbReference>
<dbReference type="Gene3D" id="3.30.460.30">
    <property type="entry name" value="Glutamyl-tRNA reductase, N-terminal domain"/>
    <property type="match status" value="1"/>
</dbReference>
<dbReference type="Gene3D" id="3.40.50.720">
    <property type="entry name" value="NAD(P)-binding Rossmann-like Domain"/>
    <property type="match status" value="1"/>
</dbReference>
<dbReference type="HAMAP" id="MF_00087">
    <property type="entry name" value="Glu_tRNA_reductase"/>
    <property type="match status" value="1"/>
</dbReference>
<dbReference type="InterPro" id="IPR000343">
    <property type="entry name" value="4pyrrol_synth_GluRdtase"/>
</dbReference>
<dbReference type="InterPro" id="IPR015896">
    <property type="entry name" value="4pyrrol_synth_GluRdtase_dimer"/>
</dbReference>
<dbReference type="InterPro" id="IPR015895">
    <property type="entry name" value="4pyrrol_synth_GluRdtase_N"/>
</dbReference>
<dbReference type="InterPro" id="IPR018214">
    <property type="entry name" value="GluRdtase_CS"/>
</dbReference>
<dbReference type="InterPro" id="IPR036453">
    <property type="entry name" value="GluRdtase_dimer_dom_sf"/>
</dbReference>
<dbReference type="InterPro" id="IPR036343">
    <property type="entry name" value="GluRdtase_N_sf"/>
</dbReference>
<dbReference type="InterPro" id="IPR036291">
    <property type="entry name" value="NAD(P)-bd_dom_sf"/>
</dbReference>
<dbReference type="InterPro" id="IPR006151">
    <property type="entry name" value="Shikm_DH/Glu-tRNA_Rdtase"/>
</dbReference>
<dbReference type="NCBIfam" id="TIGR01035">
    <property type="entry name" value="hemA"/>
    <property type="match status" value="1"/>
</dbReference>
<dbReference type="PANTHER" id="PTHR43013">
    <property type="entry name" value="GLUTAMYL-TRNA REDUCTASE"/>
    <property type="match status" value="1"/>
</dbReference>
<dbReference type="PANTHER" id="PTHR43013:SF1">
    <property type="entry name" value="GLUTAMYL-TRNA REDUCTASE"/>
    <property type="match status" value="1"/>
</dbReference>
<dbReference type="Pfam" id="PF00745">
    <property type="entry name" value="GlutR_dimer"/>
    <property type="match status" value="1"/>
</dbReference>
<dbReference type="Pfam" id="PF05201">
    <property type="entry name" value="GlutR_N"/>
    <property type="match status" value="1"/>
</dbReference>
<dbReference type="Pfam" id="PF01488">
    <property type="entry name" value="Shikimate_DH"/>
    <property type="match status" value="1"/>
</dbReference>
<dbReference type="PIRSF" id="PIRSF000445">
    <property type="entry name" value="4pyrrol_synth_GluRdtase"/>
    <property type="match status" value="1"/>
</dbReference>
<dbReference type="SUPFAM" id="SSF69742">
    <property type="entry name" value="Glutamyl tRNA-reductase catalytic, N-terminal domain"/>
    <property type="match status" value="1"/>
</dbReference>
<dbReference type="SUPFAM" id="SSF69075">
    <property type="entry name" value="Glutamyl tRNA-reductase dimerization domain"/>
    <property type="match status" value="1"/>
</dbReference>
<dbReference type="SUPFAM" id="SSF51735">
    <property type="entry name" value="NAD(P)-binding Rossmann-fold domains"/>
    <property type="match status" value="1"/>
</dbReference>
<dbReference type="PROSITE" id="PS00747">
    <property type="entry name" value="GLUTR"/>
    <property type="match status" value="1"/>
</dbReference>
<name>HEM1_YERPN</name>
<accession>Q1CJK2</accession>
<accession>C4GSC0</accession>